<organism>
    <name type="scientific">Bos taurus</name>
    <name type="common">Bovine</name>
    <dbReference type="NCBI Taxonomy" id="9913"/>
    <lineage>
        <taxon>Eukaryota</taxon>
        <taxon>Metazoa</taxon>
        <taxon>Chordata</taxon>
        <taxon>Craniata</taxon>
        <taxon>Vertebrata</taxon>
        <taxon>Euteleostomi</taxon>
        <taxon>Mammalia</taxon>
        <taxon>Eutheria</taxon>
        <taxon>Laurasiatheria</taxon>
        <taxon>Artiodactyla</taxon>
        <taxon>Ruminantia</taxon>
        <taxon>Pecora</taxon>
        <taxon>Bovidae</taxon>
        <taxon>Bovinae</taxon>
        <taxon>Bos</taxon>
    </lineage>
</organism>
<protein>
    <recommendedName>
        <fullName>Primary amine oxidase, liver isozyme</fullName>
        <ecNumber evidence="1">1.4.3.21</ecNumber>
    </recommendedName>
    <alternativeName>
        <fullName>Amine oxidase [copper-containing]</fullName>
    </alternativeName>
    <alternativeName>
        <fullName>Copper amine oxidase</fullName>
    </alternativeName>
    <alternativeName>
        <fullName>Serum amine oxidase</fullName>
        <shortName>SAO</shortName>
    </alternativeName>
</protein>
<name>AOCX_BOVIN</name>
<reference key="1">
    <citation type="journal article" date="1994" name="J. Biol. Chem.">
        <title>Primary structures for a mammalian cellular and serum copper amine oxidase.</title>
        <authorList>
            <person name="Mu D."/>
            <person name="Medzihradszky K.F."/>
            <person name="Adams G.W."/>
            <person name="Mayer P."/>
            <person name="Hines W.M."/>
            <person name="Burlingame A.L."/>
            <person name="Smith A.J."/>
            <person name="Cai D."/>
            <person name="Klinman J.P."/>
        </authorList>
    </citation>
    <scope>NUCLEOTIDE SEQUENCE [MRNA]</scope>
    <scope>PARTIAL PROTEIN SEQUENCE</scope>
    <source>
        <tissue>Liver</tissue>
    </source>
</reference>
<reference key="2">
    <citation type="journal article" date="1992" name="Biochemistry">
        <title>Identification of topaquinone and its consensus sequence in copper amine oxidases.</title>
        <authorList>
            <person name="Janes S.M."/>
            <person name="Palcic M.M."/>
            <person name="Scaman C.H."/>
            <person name="Smith A.J."/>
            <person name="Brown D.E."/>
            <person name="Dooley D.M."/>
            <person name="Mure M."/>
            <person name="Klinman J.P."/>
        </authorList>
    </citation>
    <scope>PARTIAL PROTEIN SEQUENCE</scope>
</reference>
<reference evidence="7" key="3">
    <citation type="journal article" date="2005" name="J. Mol. Biol.">
        <title>Crystal structure of amine oxidase from bovine serum.</title>
        <authorList>
            <person name="Lunelli M."/>
            <person name="Di Paolo M.L."/>
            <person name="Biadene M."/>
            <person name="Calderone V."/>
            <person name="Battistutta R."/>
            <person name="Scarpa M."/>
            <person name="Rigo A."/>
            <person name="Zanotti G."/>
        </authorList>
    </citation>
    <scope>X-RAY CRYSTALLOGRAPHY (2.37 ANGSTROMS) OF 17-762 IN COMPLEX WITH CALCIUM; COPPER AND SUBSTRATE</scope>
    <scope>TOPAQUINONE AT TYR-470</scope>
    <scope>GLYCOSYLATION AT ASN-136; ASN-231 AND ASN-665</scope>
    <scope>SUBUNIT</scope>
</reference>
<sequence>MFIFIFLSLWTLLVMGREEGGVGSEEGVGKQCHPSLPPRCPSRSPSDQPWTHPDQSQLFADLSREELTTVMSFLTQQLGPDLVDAAQARPSDNCVFSVELQLPPKAAALAHLDRGSPPPAREALAIVFFGGQPQPNVTELVVGPLPQPSYMRDVTVERHGGPLPYYRRPVLLREYLDIDQMIFNRELPQAAGVLHHCCSYKQGGQKLLTMNSAPRGVQSGDRSTWFGIYYNITKGGPYLHPVGLELLVDHKALDPADWTVQKVFFQGRYYENLAQLEEQFEAGQVNVVVIPDDGTGGFWSLKSQVPPGPTPPLQFHPQGPRFSVQGNRVASSLWTFSFGLGAFSGPRVFDVRFQGERLAYEISLQEAGAVYGGNTPAAMLTRYMDSGFGMGYFATPLIRGVDCPYLATYMDWHFVVESQTPKTLHDAFCVFEQNKGLPLRRHHSDFLSHYFGGVAQTVLVFRSVSTMLNYDYVWDMVFYPNGAIEVKLHATGYISSAFLFGAARRYGNQVGEHTLGPVHTHSAHYKVDLDVGGLENWVWAEDMAFVPTAIPWSPEHQIQRLQVTRKQLETEEQAAFPLGGASPRYLYLASKQSNKWGHPRGYRIQTVSFAGGPMPQNSPMERAFSWGRYQLAITQRKETEPSSSSVFNQNDPWTPTVDFSDFINNETIAGKDLVAWVTAGFLHIPHAEDIPNTVTVGNGVGFFLRPYNFFDQEPSMDSADSIYFREGQDAGSCEINPLACLPQAATCAPDLPVFSHGGYPEY</sequence>
<keyword id="KW-0002">3D-structure</keyword>
<keyword id="KW-0106">Calcium</keyword>
<keyword id="KW-0186">Copper</keyword>
<keyword id="KW-0903">Direct protein sequencing</keyword>
<keyword id="KW-1015">Disulfide bond</keyword>
<keyword id="KW-0325">Glycoprotein</keyword>
<keyword id="KW-0479">Metal-binding</keyword>
<keyword id="KW-0560">Oxidoreductase</keyword>
<keyword id="KW-1185">Reference proteome</keyword>
<keyword id="KW-0964">Secreted</keyword>
<keyword id="KW-0732">Signal</keyword>
<keyword id="KW-0801">TPQ</keyword>
<proteinExistence type="evidence at protein level"/>
<comment type="catalytic activity">
    <reaction evidence="1">
        <text>a primary methyl amine + O2 + H2O = an aldehyde + H2O2 + NH4(+)</text>
        <dbReference type="Rhea" id="RHEA:16153"/>
        <dbReference type="ChEBI" id="CHEBI:15377"/>
        <dbReference type="ChEBI" id="CHEBI:15379"/>
        <dbReference type="ChEBI" id="CHEBI:16240"/>
        <dbReference type="ChEBI" id="CHEBI:17478"/>
        <dbReference type="ChEBI" id="CHEBI:28938"/>
        <dbReference type="ChEBI" id="CHEBI:228804"/>
        <dbReference type="EC" id="1.4.3.21"/>
    </reaction>
</comment>
<comment type="cofactor">
    <cofactor evidence="5">
        <name>Cu cation</name>
        <dbReference type="ChEBI" id="CHEBI:23378"/>
    </cofactor>
    <text evidence="5">Binds 1 copper ion per subunit.</text>
</comment>
<comment type="cofactor">
    <cofactor evidence="5">
        <name>Ca(2+)</name>
        <dbReference type="ChEBI" id="CHEBI:29108"/>
    </cofactor>
    <text evidence="5">Binds 2 calcium ions per subunit.</text>
</comment>
<comment type="cofactor">
    <cofactor evidence="5">
        <name>L-topaquinone</name>
        <dbReference type="ChEBI" id="CHEBI:79027"/>
    </cofactor>
    <text evidence="5">Contains 1 topaquinone per subunit.</text>
</comment>
<comment type="subunit">
    <text evidence="5">Homodimer; disulfide-linked.</text>
</comment>
<comment type="subcellular location">
    <subcellularLocation>
        <location>Secreted</location>
        <location>Extracellular space</location>
    </subcellularLocation>
</comment>
<comment type="tissue specificity">
    <text>Liver.</text>
</comment>
<comment type="PTM">
    <text evidence="5">Topaquinone (TPQ) is generated by copper-dependent autoxidation of a specific tyrosyl residue.</text>
</comment>
<comment type="miscellaneous">
    <text>Inhibited by amiloride in a competitive manner.</text>
</comment>
<comment type="similarity">
    <text evidence="6">Belongs to the copper/topaquinone oxidase family.</text>
</comment>
<evidence type="ECO:0000250" key="1">
    <source>
        <dbReference type="UniProtKB" id="P19801"/>
    </source>
</evidence>
<evidence type="ECO:0000250" key="2">
    <source>
        <dbReference type="UniProtKB" id="Q16853"/>
    </source>
</evidence>
<evidence type="ECO:0000255" key="3"/>
<evidence type="ECO:0000256" key="4">
    <source>
        <dbReference type="SAM" id="MobiDB-lite"/>
    </source>
</evidence>
<evidence type="ECO:0000269" key="5">
    <source>
    </source>
</evidence>
<evidence type="ECO:0000305" key="6"/>
<evidence type="ECO:0007744" key="7">
    <source>
        <dbReference type="PDB" id="1TU5"/>
    </source>
</evidence>
<evidence type="ECO:0007744" key="8">
    <source>
        <dbReference type="PDB" id="2PNC"/>
    </source>
</evidence>
<evidence type="ECO:0007829" key="9">
    <source>
        <dbReference type="PDB" id="1TU5"/>
    </source>
</evidence>
<dbReference type="EC" id="1.4.3.21" evidence="1"/>
<dbReference type="EMBL" id="S69583">
    <property type="protein sequence ID" value="AAB30397.1"/>
    <property type="molecule type" value="mRNA"/>
</dbReference>
<dbReference type="EMBL" id="L27218">
    <property type="protein sequence ID" value="AAA30525.1"/>
    <property type="molecule type" value="mRNA"/>
</dbReference>
<dbReference type="PIR" id="A54411">
    <property type="entry name" value="A54411"/>
</dbReference>
<dbReference type="RefSeq" id="NP_001124236.1">
    <property type="nucleotide sequence ID" value="NM_001130764.1"/>
</dbReference>
<dbReference type="PDB" id="1TU5">
    <property type="method" value="X-ray"/>
    <property type="resolution" value="2.37 A"/>
    <property type="chains" value="A/B=17-762"/>
</dbReference>
<dbReference type="PDB" id="2PNC">
    <property type="method" value="X-ray"/>
    <property type="resolution" value="2.40 A"/>
    <property type="chains" value="A/B=17-762"/>
</dbReference>
<dbReference type="PDBsum" id="1TU5"/>
<dbReference type="PDBsum" id="2PNC"/>
<dbReference type="SMR" id="Q29437"/>
<dbReference type="FunCoup" id="Q29437">
    <property type="interactions" value="184"/>
</dbReference>
<dbReference type="STRING" id="9913.ENSBTAP00000058891"/>
<dbReference type="GlyGen" id="Q29437">
    <property type="glycosylation" value="3 sites"/>
</dbReference>
<dbReference type="iPTMnet" id="Q29437"/>
<dbReference type="PaxDb" id="9913-ENSBTAP00000001383"/>
<dbReference type="PeptideAtlas" id="Q29437"/>
<dbReference type="GeneID" id="789307"/>
<dbReference type="KEGG" id="bta:789307"/>
<dbReference type="CTD" id="789307"/>
<dbReference type="VEuPathDB" id="HostDB:ENSBTAG00000039321"/>
<dbReference type="eggNOG" id="KOG1186">
    <property type="taxonomic scope" value="Eukaryota"/>
</dbReference>
<dbReference type="HOGENOM" id="CLU_015739_1_0_1"/>
<dbReference type="InParanoid" id="Q29437"/>
<dbReference type="OMA" id="PRYIFFA"/>
<dbReference type="OrthoDB" id="5379943at2759"/>
<dbReference type="TreeFam" id="TF314750"/>
<dbReference type="Reactome" id="R-BTA-211945">
    <property type="pathway name" value="Phase I - Functionalization of compounds"/>
</dbReference>
<dbReference type="EvolutionaryTrace" id="Q29437"/>
<dbReference type="Proteomes" id="UP000009136">
    <property type="component" value="Chromosome 19"/>
</dbReference>
<dbReference type="Bgee" id="ENSBTAG00000039321">
    <property type="expression patterns" value="Expressed in liver and 33 other cell types or tissues"/>
</dbReference>
<dbReference type="GO" id="GO:0005769">
    <property type="term" value="C:early endosome"/>
    <property type="evidence" value="ECO:0000318"/>
    <property type="project" value="GO_Central"/>
</dbReference>
<dbReference type="GO" id="GO:0005783">
    <property type="term" value="C:endoplasmic reticulum"/>
    <property type="evidence" value="ECO:0000318"/>
    <property type="project" value="GO_Central"/>
</dbReference>
<dbReference type="GO" id="GO:0005576">
    <property type="term" value="C:extracellular region"/>
    <property type="evidence" value="ECO:0007669"/>
    <property type="project" value="UniProtKB-SubCell"/>
</dbReference>
<dbReference type="GO" id="GO:0005794">
    <property type="term" value="C:Golgi apparatus"/>
    <property type="evidence" value="ECO:0000318"/>
    <property type="project" value="GO_Central"/>
</dbReference>
<dbReference type="GO" id="GO:0005886">
    <property type="term" value="C:plasma membrane"/>
    <property type="evidence" value="ECO:0000318"/>
    <property type="project" value="GO_Central"/>
</dbReference>
<dbReference type="GO" id="GO:0005507">
    <property type="term" value="F:copper ion binding"/>
    <property type="evidence" value="ECO:0000318"/>
    <property type="project" value="GO_Central"/>
</dbReference>
<dbReference type="GO" id="GO:0008131">
    <property type="term" value="F:primary methylamine oxidase activity"/>
    <property type="evidence" value="ECO:0007669"/>
    <property type="project" value="UniProtKB-EC"/>
</dbReference>
<dbReference type="GO" id="GO:0048038">
    <property type="term" value="F:quinone binding"/>
    <property type="evidence" value="ECO:0007669"/>
    <property type="project" value="InterPro"/>
</dbReference>
<dbReference type="GO" id="GO:0009308">
    <property type="term" value="P:amine metabolic process"/>
    <property type="evidence" value="ECO:0000318"/>
    <property type="project" value="GO_Central"/>
</dbReference>
<dbReference type="FunFam" id="2.70.98.20:FF:000003">
    <property type="entry name" value="Amine oxidase"/>
    <property type="match status" value="1"/>
</dbReference>
<dbReference type="FunFam" id="3.10.450.40:FF:000001">
    <property type="entry name" value="Amine oxidase"/>
    <property type="match status" value="1"/>
</dbReference>
<dbReference type="FunFam" id="3.10.450.40:FF:000003">
    <property type="entry name" value="Amine oxidase"/>
    <property type="match status" value="1"/>
</dbReference>
<dbReference type="Gene3D" id="3.10.450.40">
    <property type="match status" value="2"/>
</dbReference>
<dbReference type="Gene3D" id="2.70.98.20">
    <property type="entry name" value="Copper amine oxidase, catalytic domain"/>
    <property type="match status" value="1"/>
</dbReference>
<dbReference type="InterPro" id="IPR049947">
    <property type="entry name" value="Cu_Am_Ox_Cu-bd"/>
</dbReference>
<dbReference type="InterPro" id="IPR049948">
    <property type="entry name" value="Cu_Am_ox_TPQ-bd"/>
</dbReference>
<dbReference type="InterPro" id="IPR000269">
    <property type="entry name" value="Cu_amine_oxidase"/>
</dbReference>
<dbReference type="InterPro" id="IPR015798">
    <property type="entry name" value="Cu_amine_oxidase_C"/>
</dbReference>
<dbReference type="InterPro" id="IPR036460">
    <property type="entry name" value="Cu_amine_oxidase_C_sf"/>
</dbReference>
<dbReference type="InterPro" id="IPR016182">
    <property type="entry name" value="Cu_amine_oxidase_N-reg"/>
</dbReference>
<dbReference type="InterPro" id="IPR015800">
    <property type="entry name" value="Cu_amine_oxidase_N2"/>
</dbReference>
<dbReference type="InterPro" id="IPR015802">
    <property type="entry name" value="Cu_amine_oxidase_N3"/>
</dbReference>
<dbReference type="PANTHER" id="PTHR10638">
    <property type="entry name" value="COPPER AMINE OXIDASE"/>
    <property type="match status" value="1"/>
</dbReference>
<dbReference type="PANTHER" id="PTHR10638:SF23">
    <property type="entry name" value="MEMBRANE PRIMARY AMINE OXIDASE"/>
    <property type="match status" value="1"/>
</dbReference>
<dbReference type="Pfam" id="PF01179">
    <property type="entry name" value="Cu_amine_oxid"/>
    <property type="match status" value="1"/>
</dbReference>
<dbReference type="Pfam" id="PF02727">
    <property type="entry name" value="Cu_amine_oxidN2"/>
    <property type="match status" value="1"/>
</dbReference>
<dbReference type="Pfam" id="PF02728">
    <property type="entry name" value="Cu_amine_oxidN3"/>
    <property type="match status" value="1"/>
</dbReference>
<dbReference type="PRINTS" id="PR00766">
    <property type="entry name" value="CUDAOXIDASE"/>
</dbReference>
<dbReference type="SUPFAM" id="SSF49998">
    <property type="entry name" value="Amine oxidase catalytic domain"/>
    <property type="match status" value="1"/>
</dbReference>
<dbReference type="SUPFAM" id="SSF54416">
    <property type="entry name" value="Amine oxidase N-terminal region"/>
    <property type="match status" value="2"/>
</dbReference>
<dbReference type="PROSITE" id="PS01164">
    <property type="entry name" value="COPPER_AMINE_OXID_1"/>
    <property type="match status" value="1"/>
</dbReference>
<dbReference type="PROSITE" id="PS01165">
    <property type="entry name" value="COPPER_AMINE_OXID_2"/>
    <property type="match status" value="1"/>
</dbReference>
<accession>Q29437</accession>
<feature type="signal peptide" evidence="3">
    <location>
        <begin position="1"/>
        <end position="16"/>
    </location>
</feature>
<feature type="chain" id="PRO_0000035669" description="Primary amine oxidase, liver isozyme">
    <location>
        <begin position="17"/>
        <end position="762"/>
    </location>
</feature>
<feature type="region of interest" description="Disordered" evidence="4">
    <location>
        <begin position="23"/>
        <end position="54"/>
    </location>
</feature>
<feature type="active site" description="Proton acceptor" evidence="1">
    <location>
        <position position="385"/>
    </location>
</feature>
<feature type="active site" description="Schiff-base intermediate with substrate; via topaquinone" evidence="8">
    <location>
        <position position="470"/>
    </location>
</feature>
<feature type="binding site" evidence="8">
    <location>
        <begin position="383"/>
        <end position="393"/>
    </location>
    <ligand>
        <name>substrate</name>
    </ligand>
</feature>
<feature type="binding site" evidence="8">
    <location>
        <begin position="467"/>
        <end position="472"/>
    </location>
    <ligand>
        <name>substrate</name>
    </ligand>
</feature>
<feature type="binding site" evidence="5 7 8">
    <location>
        <position position="519"/>
    </location>
    <ligand>
        <name>Cu cation</name>
        <dbReference type="ChEBI" id="CHEBI:23378"/>
    </ligand>
</feature>
<feature type="binding site" evidence="5 7 8">
    <location>
        <position position="521"/>
    </location>
    <ligand>
        <name>Cu cation</name>
        <dbReference type="ChEBI" id="CHEBI:23378"/>
    </ligand>
</feature>
<feature type="binding site" evidence="7 8">
    <location>
        <position position="528"/>
    </location>
    <ligand>
        <name>Ca(2+)</name>
        <dbReference type="ChEBI" id="CHEBI:29108"/>
        <label>1</label>
    </ligand>
</feature>
<feature type="binding site" evidence="7 8">
    <location>
        <position position="529"/>
    </location>
    <ligand>
        <name>Ca(2+)</name>
        <dbReference type="ChEBI" id="CHEBI:29108"/>
        <label>1</label>
    </ligand>
</feature>
<feature type="binding site" evidence="7 8">
    <location>
        <position position="530"/>
    </location>
    <ligand>
        <name>Ca(2+)</name>
        <dbReference type="ChEBI" id="CHEBI:29108"/>
        <label>1</label>
    </ligand>
</feature>
<feature type="binding site" evidence="7 8">
    <location>
        <position position="571"/>
    </location>
    <ligand>
        <name>Ca(2+)</name>
        <dbReference type="ChEBI" id="CHEBI:29108"/>
        <label>2</label>
    </ligand>
</feature>
<feature type="binding site" evidence="7 8">
    <location>
        <position position="662"/>
    </location>
    <ligand>
        <name>Ca(2+)</name>
        <dbReference type="ChEBI" id="CHEBI:29108"/>
        <label>2</label>
    </ligand>
</feature>
<feature type="binding site" evidence="7 8">
    <location>
        <position position="664"/>
    </location>
    <ligand>
        <name>Ca(2+)</name>
        <dbReference type="ChEBI" id="CHEBI:29108"/>
        <label>2</label>
    </ligand>
</feature>
<feature type="binding site" evidence="7 8">
    <location>
        <position position="666"/>
    </location>
    <ligand>
        <name>Ca(2+)</name>
        <dbReference type="ChEBI" id="CHEBI:29108"/>
        <label>2</label>
    </ligand>
</feature>
<feature type="binding site" evidence="7 8">
    <location>
        <position position="672"/>
    </location>
    <ligand>
        <name>Ca(2+)</name>
        <dbReference type="ChEBI" id="CHEBI:29108"/>
        <label>1</label>
    </ligand>
</feature>
<feature type="binding site" evidence="7 8">
    <location>
        <position position="673"/>
    </location>
    <ligand>
        <name>Ca(2+)</name>
        <dbReference type="ChEBI" id="CHEBI:29108"/>
        <label>1</label>
    </ligand>
</feature>
<feature type="binding site" evidence="5 7 8">
    <location>
        <position position="683"/>
    </location>
    <ligand>
        <name>Cu cation</name>
        <dbReference type="ChEBI" id="CHEBI:23378"/>
    </ligand>
</feature>
<feature type="modified residue" description="2',4',5'-topaquinone" evidence="7">
    <location>
        <position position="470"/>
    </location>
</feature>
<feature type="glycosylation site" description="N-linked (GlcNAc...) asparagine" evidence="5 7 8">
    <location>
        <position position="136"/>
    </location>
</feature>
<feature type="glycosylation site" description="N-linked (GlcNAc...) asparagine" evidence="5 7">
    <location>
        <position position="231"/>
    </location>
</feature>
<feature type="glycosylation site" description="N-linked (GlcNAc...) asparagine" evidence="5 7">
    <location>
        <position position="665"/>
    </location>
</feature>
<feature type="disulfide bond" evidence="2">
    <location>
        <begin position="197"/>
        <end position="198"/>
    </location>
</feature>
<feature type="disulfide bond" evidence="1">
    <location>
        <begin position="403"/>
        <end position="429"/>
    </location>
</feature>
<feature type="disulfide bond" evidence="2">
    <location>
        <begin position="733"/>
        <end position="740"/>
    </location>
</feature>
<feature type="disulfide bond" description="Interchain" evidence="1">
    <location>
        <position position="747"/>
    </location>
</feature>
<feature type="helix" evidence="9">
    <location>
        <begin position="64"/>
        <end position="78"/>
    </location>
</feature>
<feature type="turn" evidence="9">
    <location>
        <begin position="85"/>
        <end position="87"/>
    </location>
</feature>
<feature type="strand" evidence="9">
    <location>
        <begin position="92"/>
        <end position="101"/>
    </location>
</feature>
<feature type="helix" evidence="9">
    <location>
        <begin position="105"/>
        <end position="114"/>
    </location>
</feature>
<feature type="strand" evidence="9">
    <location>
        <begin position="122"/>
        <end position="129"/>
    </location>
</feature>
<feature type="strand" evidence="9">
    <location>
        <begin position="131"/>
        <end position="134"/>
    </location>
</feature>
<feature type="strand" evidence="9">
    <location>
        <begin position="136"/>
        <end position="147"/>
    </location>
</feature>
<feature type="strand" evidence="9">
    <location>
        <begin position="150"/>
        <end position="153"/>
    </location>
</feature>
<feature type="helix" evidence="9">
    <location>
        <begin position="155"/>
        <end position="159"/>
    </location>
</feature>
<feature type="helix" evidence="9">
    <location>
        <begin position="165"/>
        <end position="167"/>
    </location>
</feature>
<feature type="helix" evidence="9">
    <location>
        <begin position="172"/>
        <end position="184"/>
    </location>
</feature>
<feature type="helix" evidence="9">
    <location>
        <begin position="187"/>
        <end position="190"/>
    </location>
</feature>
<feature type="helix" evidence="9">
    <location>
        <begin position="191"/>
        <end position="198"/>
    </location>
</feature>
<feature type="turn" evidence="9">
    <location>
        <begin position="200"/>
        <end position="203"/>
    </location>
</feature>
<feature type="strand" evidence="9">
    <location>
        <begin position="207"/>
        <end position="210"/>
    </location>
</feature>
<feature type="strand" evidence="9">
    <location>
        <begin position="216"/>
        <end position="218"/>
    </location>
</feature>
<feature type="strand" evidence="9">
    <location>
        <begin position="223"/>
        <end position="230"/>
    </location>
</feature>
<feature type="strand" evidence="9">
    <location>
        <begin position="233"/>
        <end position="235"/>
    </location>
</feature>
<feature type="helix" evidence="9">
    <location>
        <begin position="237"/>
        <end position="239"/>
    </location>
</feature>
<feature type="strand" evidence="9">
    <location>
        <begin position="240"/>
        <end position="249"/>
    </location>
</feature>
<feature type="strand" evidence="9">
    <location>
        <begin position="252"/>
        <end position="254"/>
    </location>
</feature>
<feature type="helix" evidence="9">
    <location>
        <begin position="255"/>
        <end position="257"/>
    </location>
</feature>
<feature type="strand" evidence="9">
    <location>
        <begin position="259"/>
        <end position="265"/>
    </location>
</feature>
<feature type="strand" evidence="9">
    <location>
        <begin position="268"/>
        <end position="272"/>
    </location>
</feature>
<feature type="helix" evidence="9">
    <location>
        <begin position="273"/>
        <end position="281"/>
    </location>
</feature>
<feature type="strand" evidence="9">
    <location>
        <begin position="322"/>
        <end position="325"/>
    </location>
</feature>
<feature type="strand" evidence="9">
    <location>
        <begin position="328"/>
        <end position="341"/>
    </location>
</feature>
<feature type="turn" evidence="9">
    <location>
        <begin position="342"/>
        <end position="344"/>
    </location>
</feature>
<feature type="strand" evidence="9">
    <location>
        <begin position="345"/>
        <end position="353"/>
    </location>
</feature>
<feature type="strand" evidence="9">
    <location>
        <begin position="356"/>
        <end position="371"/>
    </location>
</feature>
<feature type="helix" evidence="9">
    <location>
        <begin position="376"/>
        <end position="380"/>
    </location>
</feature>
<feature type="strand" evidence="9">
    <location>
        <begin position="382"/>
        <end position="384"/>
    </location>
</feature>
<feature type="helix" evidence="9">
    <location>
        <begin position="385"/>
        <end position="387"/>
    </location>
</feature>
<feature type="turn" evidence="9">
    <location>
        <begin position="390"/>
        <end position="393"/>
    </location>
</feature>
<feature type="turn" evidence="9">
    <location>
        <begin position="399"/>
        <end position="401"/>
    </location>
</feature>
<feature type="strand" evidence="9">
    <location>
        <begin position="407"/>
        <end position="420"/>
    </location>
</feature>
<feature type="strand" evidence="9">
    <location>
        <begin position="422"/>
        <end position="441"/>
    </location>
</feature>
<feature type="strand" evidence="9">
    <location>
        <begin position="453"/>
        <end position="467"/>
    </location>
</feature>
<feature type="strand" evidence="9">
    <location>
        <begin position="470"/>
        <end position="478"/>
    </location>
</feature>
<feature type="strand" evidence="9">
    <location>
        <begin position="484"/>
        <end position="492"/>
    </location>
</feature>
<feature type="helix" evidence="9">
    <location>
        <begin position="503"/>
        <end position="506"/>
    </location>
</feature>
<feature type="strand" evidence="9">
    <location>
        <begin position="507"/>
        <end position="511"/>
    </location>
</feature>
<feature type="strand" evidence="9">
    <location>
        <begin position="514"/>
        <end position="517"/>
    </location>
</feature>
<feature type="strand" evidence="9">
    <location>
        <begin position="519"/>
        <end position="529"/>
    </location>
</feature>
<feature type="strand" evidence="9">
    <location>
        <begin position="533"/>
        <end position="550"/>
    </location>
</feature>
<feature type="strand" evidence="9">
    <location>
        <begin position="553"/>
        <end position="567"/>
    </location>
</feature>
<feature type="helix" evidence="9">
    <location>
        <begin position="571"/>
        <end position="574"/>
    </location>
</feature>
<feature type="strand" evidence="9">
    <location>
        <begin position="575"/>
        <end position="577"/>
    </location>
</feature>
<feature type="strand" evidence="9">
    <location>
        <begin position="584"/>
        <end position="593"/>
    </location>
</feature>
<feature type="strand" evidence="9">
    <location>
        <begin position="599"/>
        <end position="607"/>
    </location>
</feature>
<feature type="helix" evidence="9">
    <location>
        <begin position="621"/>
        <end position="628"/>
    </location>
</feature>
<feature type="strand" evidence="9">
    <location>
        <begin position="629"/>
        <end position="635"/>
    </location>
</feature>
<feature type="turn" evidence="9">
    <location>
        <begin position="646"/>
        <end position="650"/>
    </location>
</feature>
<feature type="helix" evidence="9">
    <location>
        <begin position="659"/>
        <end position="662"/>
    </location>
</feature>
<feature type="strand" evidence="9">
    <location>
        <begin position="669"/>
        <end position="683"/>
    </location>
</feature>
<feature type="helix" evidence="9">
    <location>
        <begin position="687"/>
        <end position="689"/>
    </location>
</feature>
<feature type="strand" evidence="9">
    <location>
        <begin position="700"/>
        <end position="713"/>
    </location>
</feature>